<proteinExistence type="inferred from homology"/>
<protein>
    <recommendedName>
        <fullName evidence="1">PF03932 family protein CutC</fullName>
    </recommendedName>
</protein>
<feature type="chain" id="PRO_1000133834" description="PF03932 family protein CutC">
    <location>
        <begin position="1"/>
        <end position="248"/>
    </location>
</feature>
<comment type="subunit">
    <text evidence="1">Homodimer.</text>
</comment>
<comment type="subcellular location">
    <subcellularLocation>
        <location evidence="1">Cytoplasm</location>
    </subcellularLocation>
</comment>
<comment type="similarity">
    <text evidence="1">Belongs to the CutC family.</text>
</comment>
<comment type="caution">
    <text evidence="1">Once thought to be involved in copper homeostasis, experiments in E.coli have shown this is not the case.</text>
</comment>
<sequence>MALLEICCYSMECALTAQQNGADRVELCAAPKEGGLTPSLGVLKSVRQRVTIPVHPIIRPRGGDFCYSDGEFAAILEDVRTVRELGFPGLVTGVLDVDGNVDMPRMEKIMAAAGPLAVTFHRAFDMCANPLYTLNNLAELGIARVLTSGQKSDALQGLSKIMELIAHRDAPIIMAGAGVRAENLHHFLDAGVLEVHSSAGAWQASPMRYRNQGLSMSSDEHADEYSRYIVDGAAVAEMKGIIERHQAK</sequence>
<name>CUTC_ECODH</name>
<accession>B1XHE2</accession>
<keyword id="KW-0963">Cytoplasm</keyword>
<gene>
    <name evidence="1" type="primary">cutC</name>
    <name type="ordered locus">ECDH10B_2015</name>
</gene>
<dbReference type="EMBL" id="CP000948">
    <property type="protein sequence ID" value="ACB03072.1"/>
    <property type="molecule type" value="Genomic_DNA"/>
</dbReference>
<dbReference type="RefSeq" id="WP_001185741.1">
    <property type="nucleotide sequence ID" value="NC_010473.1"/>
</dbReference>
<dbReference type="SMR" id="B1XHE2"/>
<dbReference type="GeneID" id="93776175"/>
<dbReference type="KEGG" id="ecd:ECDH10B_2015"/>
<dbReference type="HOGENOM" id="CLU_050555_3_1_6"/>
<dbReference type="GO" id="GO:0005737">
    <property type="term" value="C:cytoplasm"/>
    <property type="evidence" value="ECO:0007669"/>
    <property type="project" value="UniProtKB-SubCell"/>
</dbReference>
<dbReference type="GO" id="GO:0005507">
    <property type="term" value="F:copper ion binding"/>
    <property type="evidence" value="ECO:0007669"/>
    <property type="project" value="TreeGrafter"/>
</dbReference>
<dbReference type="FunFam" id="3.20.20.380:FF:000001">
    <property type="entry name" value="Copper homeostasis protein CutC"/>
    <property type="match status" value="1"/>
</dbReference>
<dbReference type="Gene3D" id="3.20.20.380">
    <property type="entry name" value="Copper homeostasis (CutC) domain"/>
    <property type="match status" value="1"/>
</dbReference>
<dbReference type="HAMAP" id="MF_00795">
    <property type="entry name" value="CutC"/>
    <property type="match status" value="1"/>
</dbReference>
<dbReference type="InterPro" id="IPR005627">
    <property type="entry name" value="CutC-like"/>
</dbReference>
<dbReference type="InterPro" id="IPR036822">
    <property type="entry name" value="CutC-like_dom_sf"/>
</dbReference>
<dbReference type="NCBIfam" id="NF008603">
    <property type="entry name" value="PRK11572.1"/>
    <property type="match status" value="1"/>
</dbReference>
<dbReference type="PANTHER" id="PTHR12598">
    <property type="entry name" value="COPPER HOMEOSTASIS PROTEIN CUTC"/>
    <property type="match status" value="1"/>
</dbReference>
<dbReference type="PANTHER" id="PTHR12598:SF0">
    <property type="entry name" value="COPPER HOMEOSTASIS PROTEIN CUTC HOMOLOG"/>
    <property type="match status" value="1"/>
</dbReference>
<dbReference type="Pfam" id="PF03932">
    <property type="entry name" value="CutC"/>
    <property type="match status" value="1"/>
</dbReference>
<dbReference type="SUPFAM" id="SSF110395">
    <property type="entry name" value="CutC-like"/>
    <property type="match status" value="1"/>
</dbReference>
<organism>
    <name type="scientific">Escherichia coli (strain K12 / DH10B)</name>
    <dbReference type="NCBI Taxonomy" id="316385"/>
    <lineage>
        <taxon>Bacteria</taxon>
        <taxon>Pseudomonadati</taxon>
        <taxon>Pseudomonadota</taxon>
        <taxon>Gammaproteobacteria</taxon>
        <taxon>Enterobacterales</taxon>
        <taxon>Enterobacteriaceae</taxon>
        <taxon>Escherichia</taxon>
    </lineage>
</organism>
<reference key="1">
    <citation type="journal article" date="2008" name="J. Bacteriol.">
        <title>The complete genome sequence of Escherichia coli DH10B: insights into the biology of a laboratory workhorse.</title>
        <authorList>
            <person name="Durfee T."/>
            <person name="Nelson R."/>
            <person name="Baldwin S."/>
            <person name="Plunkett G. III"/>
            <person name="Burland V."/>
            <person name="Mau B."/>
            <person name="Petrosino J.F."/>
            <person name="Qin X."/>
            <person name="Muzny D.M."/>
            <person name="Ayele M."/>
            <person name="Gibbs R.A."/>
            <person name="Csorgo B."/>
            <person name="Posfai G."/>
            <person name="Weinstock G.M."/>
            <person name="Blattner F.R."/>
        </authorList>
    </citation>
    <scope>NUCLEOTIDE SEQUENCE [LARGE SCALE GENOMIC DNA]</scope>
    <source>
        <strain>K12 / DH10B</strain>
    </source>
</reference>
<evidence type="ECO:0000255" key="1">
    <source>
        <dbReference type="HAMAP-Rule" id="MF_00795"/>
    </source>
</evidence>